<evidence type="ECO:0000255" key="1">
    <source>
        <dbReference type="HAMAP-Rule" id="MF_01014"/>
    </source>
</evidence>
<comment type="catalytic activity">
    <reaction evidence="1">
        <text>1-(5-phospho-beta-D-ribosyl)-5-[(5-phospho-beta-D-ribosylamino)methylideneamino]imidazole-4-carboxamide = 5-[(5-phospho-1-deoxy-D-ribulos-1-ylimino)methylamino]-1-(5-phospho-beta-D-ribosyl)imidazole-4-carboxamide</text>
        <dbReference type="Rhea" id="RHEA:15469"/>
        <dbReference type="ChEBI" id="CHEBI:58435"/>
        <dbReference type="ChEBI" id="CHEBI:58525"/>
        <dbReference type="EC" id="5.3.1.16"/>
    </reaction>
</comment>
<comment type="pathway">
    <text evidence="1">Amino-acid biosynthesis; L-histidine biosynthesis; L-histidine from 5-phospho-alpha-D-ribose 1-diphosphate: step 4/9.</text>
</comment>
<comment type="subcellular location">
    <subcellularLocation>
        <location evidence="1">Cytoplasm</location>
    </subcellularLocation>
</comment>
<comment type="similarity">
    <text evidence="1">Belongs to the HisA/HisF family.</text>
</comment>
<protein>
    <recommendedName>
        <fullName evidence="1">1-(5-phosphoribosyl)-5-[(5-phosphoribosylamino)methylideneamino] imidazole-4-carboxamide isomerase</fullName>
        <ecNumber evidence="1">5.3.1.16</ecNumber>
    </recommendedName>
    <alternativeName>
        <fullName evidence="1">Phosphoribosylformimino-5-aminoimidazole carboxamide ribotide isomerase</fullName>
    </alternativeName>
</protein>
<keyword id="KW-0028">Amino-acid biosynthesis</keyword>
<keyword id="KW-0963">Cytoplasm</keyword>
<keyword id="KW-0368">Histidine biosynthesis</keyword>
<keyword id="KW-0413">Isomerase</keyword>
<keyword id="KW-1185">Reference proteome</keyword>
<dbReference type="EC" id="5.3.1.16" evidence="1"/>
<dbReference type="EMBL" id="CP000872">
    <property type="protein sequence ID" value="ABX63113.1"/>
    <property type="molecule type" value="Genomic_DNA"/>
</dbReference>
<dbReference type="RefSeq" id="WP_002965150.1">
    <property type="nucleotide sequence ID" value="NC_010103.1"/>
</dbReference>
<dbReference type="SMR" id="A9M9R8"/>
<dbReference type="GeneID" id="97534653"/>
<dbReference type="KEGG" id="bcs:BCAN_A2130"/>
<dbReference type="HOGENOM" id="CLU_048577_1_1_5"/>
<dbReference type="PhylomeDB" id="A9M9R8"/>
<dbReference type="UniPathway" id="UPA00031">
    <property type="reaction ID" value="UER00009"/>
</dbReference>
<dbReference type="Proteomes" id="UP000001385">
    <property type="component" value="Chromosome I"/>
</dbReference>
<dbReference type="GO" id="GO:0005737">
    <property type="term" value="C:cytoplasm"/>
    <property type="evidence" value="ECO:0007669"/>
    <property type="project" value="UniProtKB-SubCell"/>
</dbReference>
<dbReference type="GO" id="GO:0003949">
    <property type="term" value="F:1-(5-phosphoribosyl)-5-[(5-phosphoribosylamino)methylideneamino]imidazole-4-carboxamide isomerase activity"/>
    <property type="evidence" value="ECO:0007669"/>
    <property type="project" value="UniProtKB-UniRule"/>
</dbReference>
<dbReference type="GO" id="GO:0000105">
    <property type="term" value="P:L-histidine biosynthetic process"/>
    <property type="evidence" value="ECO:0007669"/>
    <property type="project" value="UniProtKB-UniRule"/>
</dbReference>
<dbReference type="GO" id="GO:0000162">
    <property type="term" value="P:L-tryptophan biosynthetic process"/>
    <property type="evidence" value="ECO:0007669"/>
    <property type="project" value="TreeGrafter"/>
</dbReference>
<dbReference type="CDD" id="cd04732">
    <property type="entry name" value="HisA"/>
    <property type="match status" value="1"/>
</dbReference>
<dbReference type="FunFam" id="3.20.20.70:FF:000009">
    <property type="entry name" value="1-(5-phosphoribosyl)-5-[(5-phosphoribosylamino)methylideneamino] imidazole-4-carboxamide isomerase"/>
    <property type="match status" value="1"/>
</dbReference>
<dbReference type="Gene3D" id="3.20.20.70">
    <property type="entry name" value="Aldolase class I"/>
    <property type="match status" value="1"/>
</dbReference>
<dbReference type="HAMAP" id="MF_01014">
    <property type="entry name" value="HisA"/>
    <property type="match status" value="1"/>
</dbReference>
<dbReference type="InterPro" id="IPR013785">
    <property type="entry name" value="Aldolase_TIM"/>
</dbReference>
<dbReference type="InterPro" id="IPR006062">
    <property type="entry name" value="His_biosynth"/>
</dbReference>
<dbReference type="InterPro" id="IPR006063">
    <property type="entry name" value="HisA_bact_arch"/>
</dbReference>
<dbReference type="InterPro" id="IPR044524">
    <property type="entry name" value="Isoase_HisA-like"/>
</dbReference>
<dbReference type="InterPro" id="IPR023016">
    <property type="entry name" value="Isoase_HisA-like_bact"/>
</dbReference>
<dbReference type="InterPro" id="IPR011060">
    <property type="entry name" value="RibuloseP-bd_barrel"/>
</dbReference>
<dbReference type="NCBIfam" id="TIGR00007">
    <property type="entry name" value="1-(5-phosphoribosyl)-5-[(5-phosphoribosylamino)methylideneamino]imidazole-4-carboxamide isomerase"/>
    <property type="match status" value="1"/>
</dbReference>
<dbReference type="PANTHER" id="PTHR43090">
    <property type="entry name" value="1-(5-PHOSPHORIBOSYL)-5-[(5-PHOSPHORIBOSYLAMINO)METHYLIDENEAMINO] IMIDAZOLE-4-CARBOXAMIDE ISOMERASE"/>
    <property type="match status" value="1"/>
</dbReference>
<dbReference type="PANTHER" id="PTHR43090:SF2">
    <property type="entry name" value="1-(5-PHOSPHORIBOSYL)-5-[(5-PHOSPHORIBOSYLAMINO)METHYLIDENEAMINO] IMIDAZOLE-4-CARBOXAMIDE ISOMERASE"/>
    <property type="match status" value="1"/>
</dbReference>
<dbReference type="Pfam" id="PF00977">
    <property type="entry name" value="His_biosynth"/>
    <property type="match status" value="1"/>
</dbReference>
<dbReference type="SUPFAM" id="SSF51366">
    <property type="entry name" value="Ribulose-phoshate binding barrel"/>
    <property type="match status" value="1"/>
</dbReference>
<feature type="chain" id="PRO_1000084089" description="1-(5-phosphoribosyl)-5-[(5-phosphoribosylamino)methylideneamino] imidazole-4-carboxamide isomerase">
    <location>
        <begin position="1"/>
        <end position="243"/>
    </location>
</feature>
<feature type="active site" description="Proton acceptor" evidence="1">
    <location>
        <position position="8"/>
    </location>
</feature>
<feature type="active site" description="Proton donor" evidence="1">
    <location>
        <position position="129"/>
    </location>
</feature>
<proteinExistence type="inferred from homology"/>
<name>HIS4_BRUC2</name>
<organism>
    <name type="scientific">Brucella canis (strain ATCC 23365 / NCTC 10854 / RM-666)</name>
    <dbReference type="NCBI Taxonomy" id="483179"/>
    <lineage>
        <taxon>Bacteria</taxon>
        <taxon>Pseudomonadati</taxon>
        <taxon>Pseudomonadota</taxon>
        <taxon>Alphaproteobacteria</taxon>
        <taxon>Hyphomicrobiales</taxon>
        <taxon>Brucellaceae</taxon>
        <taxon>Brucella/Ochrobactrum group</taxon>
        <taxon>Brucella</taxon>
    </lineage>
</organism>
<reference key="1">
    <citation type="submission" date="2007-10" db="EMBL/GenBank/DDBJ databases">
        <title>Brucella canis ATCC 23365 whole genome shotgun sequencing project.</title>
        <authorList>
            <person name="Setubal J.C."/>
            <person name="Bowns C."/>
            <person name="Boyle S."/>
            <person name="Crasta O.R."/>
            <person name="Czar M.J."/>
            <person name="Dharmanolla C."/>
            <person name="Gillespie J.J."/>
            <person name="Kenyon R.W."/>
            <person name="Lu J."/>
            <person name="Mane S."/>
            <person name="Mohapatra S."/>
            <person name="Nagrani S."/>
            <person name="Purkayastha A."/>
            <person name="Rajasimha H.K."/>
            <person name="Shallom J.M."/>
            <person name="Shallom S."/>
            <person name="Shukla M."/>
            <person name="Snyder E.E."/>
            <person name="Sobral B.W."/>
            <person name="Wattam A.R."/>
            <person name="Will R."/>
            <person name="Williams K."/>
            <person name="Yoo H."/>
            <person name="Bruce D."/>
            <person name="Detter C."/>
            <person name="Munk C."/>
            <person name="Brettin T.S."/>
        </authorList>
    </citation>
    <scope>NUCLEOTIDE SEQUENCE [LARGE SCALE GENOMIC DNA]</scope>
    <source>
        <strain>ATCC 23365 / NCTC 10854 / RM-666</strain>
    </source>
</reference>
<gene>
    <name evidence="1" type="primary">hisA</name>
    <name type="ordered locus">BCAN_A2130</name>
</gene>
<sequence length="243" mass="25589">MILFPAIDLKDGQCVRLKLGDMDQATIYNEDPAAQAKAFEDQGFEWLHVVDLNGAFAGESVNGTAVEAILKATKNPVQLGGGIRTLAHIENWLSRGLRRVILGTVAVRDPALVMEACKAFPGQVAVGIDAKGGKVAVEGWAEASRLGVIELAKKFEGAGVAAIIYTDIDRDGVLAGINWDSTLALAEAVSIPVIASGGLASMEDIRRLATPEMRKLEGAISGRALYDGRIDPAEALSVLRAAA</sequence>
<accession>A9M9R8</accession>